<gene>
    <name type="primary">MT-ATP8</name>
    <name type="synonym">ATP8</name>
    <name type="synonym">ATPASE8</name>
    <name type="synonym">MTATP8</name>
</gene>
<comment type="function">
    <text evidence="1">Mitochondrial membrane ATP synthase (F(1)F(0) ATP synthase or Complex V) produces ATP from ADP in the presence of a proton gradient across the membrane which is generated by electron transport complexes of the respiratory chain. F-type ATPases consist of two structural domains, F(1) - containing the extramembraneous catalytic core and F(0) - containing the membrane proton channel, linked together by a central stalk and a peripheral stalk. During catalysis, ATP synthesis in the catalytic domain of F(1) is coupled via a rotary mechanism of the central stalk subunits to proton translocation. Part of the complex F(0) domain. Minor subunit located with subunit a in the membrane (By similarity).</text>
</comment>
<comment type="subunit">
    <text evidence="1">F-type ATPases have 2 components, CF(1) - the catalytic core - and CF(0) - the membrane proton channel.</text>
</comment>
<comment type="subcellular location">
    <subcellularLocation>
        <location>Mitochondrion membrane</location>
        <topology>Single-pass membrane protein</topology>
    </subcellularLocation>
</comment>
<comment type="similarity">
    <text evidence="3">Belongs to the ATPase protein 8 family.</text>
</comment>
<sequence>MPQLNLAWWLLNFFLGWTSLLVIFIILLNTSITNNTANTSTTTNTTPNLNWTWN</sequence>
<geneLocation type="mitochondrion"/>
<reference key="1">
    <citation type="journal article" date="1995" name="Genetics">
        <title>Nucleotide sequence and gene organization of the starfish Asterina pectinifera mitochondrial genome.</title>
        <authorList>
            <person name="Asakawa S."/>
            <person name="Himeno H."/>
            <person name="Miura K."/>
            <person name="Watanabe K."/>
        </authorList>
    </citation>
    <scope>NUCLEOTIDE SEQUENCE [GENOMIC DNA]</scope>
    <source>
        <tissue>Ovary</tissue>
    </source>
</reference>
<name>ATP8_PATPE</name>
<keyword id="KW-0066">ATP synthesis</keyword>
<keyword id="KW-0138">CF(0)</keyword>
<keyword id="KW-0375">Hydrogen ion transport</keyword>
<keyword id="KW-0406">Ion transport</keyword>
<keyword id="KW-0472">Membrane</keyword>
<keyword id="KW-0496">Mitochondrion</keyword>
<keyword id="KW-0812">Transmembrane</keyword>
<keyword id="KW-1133">Transmembrane helix</keyword>
<keyword id="KW-0813">Transport</keyword>
<proteinExistence type="inferred from homology"/>
<evidence type="ECO:0000250" key="1"/>
<evidence type="ECO:0000255" key="2"/>
<evidence type="ECO:0000305" key="3"/>
<accession>Q33822</accession>
<organism>
    <name type="scientific">Patiria pectinifera</name>
    <name type="common">Starfish</name>
    <name type="synonym">Asterina pectinifera</name>
    <dbReference type="NCBI Taxonomy" id="7594"/>
    <lineage>
        <taxon>Eukaryota</taxon>
        <taxon>Metazoa</taxon>
        <taxon>Echinodermata</taxon>
        <taxon>Eleutherozoa</taxon>
        <taxon>Asterozoa</taxon>
        <taxon>Asteroidea</taxon>
        <taxon>Valvatacea</taxon>
        <taxon>Valvatida</taxon>
        <taxon>Asterinidae</taxon>
        <taxon>Patiria</taxon>
    </lineage>
</organism>
<feature type="chain" id="PRO_0000195490" description="ATP synthase protein 8">
    <location>
        <begin position="1"/>
        <end position="54"/>
    </location>
</feature>
<feature type="transmembrane region" description="Helical" evidence="2">
    <location>
        <begin position="8"/>
        <end position="28"/>
    </location>
</feature>
<dbReference type="EMBL" id="D16387">
    <property type="protein sequence ID" value="BAA03883.1"/>
    <property type="molecule type" value="Genomic_DNA"/>
</dbReference>
<dbReference type="PIR" id="S70600">
    <property type="entry name" value="S70600"/>
</dbReference>
<dbReference type="RefSeq" id="NP_008171.1">
    <property type="nucleotide sequence ID" value="NC_001627.1"/>
</dbReference>
<dbReference type="SMR" id="Q33822"/>
<dbReference type="GeneID" id="807821"/>
<dbReference type="CTD" id="4509"/>
<dbReference type="GO" id="GO:0031966">
    <property type="term" value="C:mitochondrial membrane"/>
    <property type="evidence" value="ECO:0007669"/>
    <property type="project" value="UniProtKB-SubCell"/>
</dbReference>
<dbReference type="GO" id="GO:0045259">
    <property type="term" value="C:proton-transporting ATP synthase complex"/>
    <property type="evidence" value="ECO:0007669"/>
    <property type="project" value="UniProtKB-KW"/>
</dbReference>
<dbReference type="GO" id="GO:0015078">
    <property type="term" value="F:proton transmembrane transporter activity"/>
    <property type="evidence" value="ECO:0007669"/>
    <property type="project" value="InterPro"/>
</dbReference>
<dbReference type="GO" id="GO:0015986">
    <property type="term" value="P:proton motive force-driven ATP synthesis"/>
    <property type="evidence" value="ECO:0007669"/>
    <property type="project" value="InterPro"/>
</dbReference>
<dbReference type="InterPro" id="IPR001421">
    <property type="entry name" value="ATP8_metazoa"/>
</dbReference>
<dbReference type="Pfam" id="PF00895">
    <property type="entry name" value="ATP-synt_8"/>
    <property type="match status" value="1"/>
</dbReference>
<protein>
    <recommendedName>
        <fullName>ATP synthase protein 8</fullName>
    </recommendedName>
    <alternativeName>
        <fullName>A6L</fullName>
    </alternativeName>
    <alternativeName>
        <fullName>F-ATPase subunit 8</fullName>
    </alternativeName>
</protein>